<organism>
    <name type="scientific">Homo sapiens</name>
    <name type="common">Human</name>
    <dbReference type="NCBI Taxonomy" id="9606"/>
    <lineage>
        <taxon>Eukaryota</taxon>
        <taxon>Metazoa</taxon>
        <taxon>Chordata</taxon>
        <taxon>Craniata</taxon>
        <taxon>Vertebrata</taxon>
        <taxon>Euteleostomi</taxon>
        <taxon>Mammalia</taxon>
        <taxon>Eutheria</taxon>
        <taxon>Euarchontoglires</taxon>
        <taxon>Primates</taxon>
        <taxon>Haplorrhini</taxon>
        <taxon>Catarrhini</taxon>
        <taxon>Hominidae</taxon>
        <taxon>Homo</taxon>
    </lineage>
</organism>
<name>TCHP_HUMAN</name>
<reference evidence="7" key="1">
    <citation type="journal article" date="2005" name="J. Cell Sci.">
        <title>Identification of trichoplein, a novel keratin filament-binding protein.</title>
        <authorList>
            <person name="Nishizawa M."/>
            <person name="Izawa I."/>
            <person name="Inoko A."/>
            <person name="Hayashi Y."/>
            <person name="Nagata K."/>
            <person name="Yokoyama T."/>
            <person name="Usukura J."/>
            <person name="Inagaki M."/>
        </authorList>
    </citation>
    <scope>NUCLEOTIDE SEQUENCE [MRNA]</scope>
    <scope>FUNCTION</scope>
    <scope>INTERACTION WITH KRT5; KRT6A; KRT8; KRT14; KRT16 AND KRT18</scope>
    <scope>SUBCELLULAR LOCATION</scope>
    <source>
        <tissue evidence="3">Liver</tissue>
    </source>
</reference>
<reference evidence="11" key="2">
    <citation type="submission" date="2000-08" db="EMBL/GenBank/DDBJ databases">
        <title>A novel tumor suppressor gene at 12q (TS12Q).</title>
        <authorList>
            <person name="Baffa R."/>
            <person name="Croce C.M."/>
            <person name="Gomella L.G."/>
            <person name="Iozzo R.V."/>
            <person name="Vecchione A."/>
        </authorList>
    </citation>
    <scope>NUCLEOTIDE SEQUENCE [MRNA]</scope>
</reference>
<reference evidence="13" key="3">
    <citation type="journal article" date="2004" name="Nat. Genet.">
        <title>Complete sequencing and characterization of 21,243 full-length human cDNAs.</title>
        <authorList>
            <person name="Ota T."/>
            <person name="Suzuki Y."/>
            <person name="Nishikawa T."/>
            <person name="Otsuki T."/>
            <person name="Sugiyama T."/>
            <person name="Irie R."/>
            <person name="Wakamatsu A."/>
            <person name="Hayashi K."/>
            <person name="Sato H."/>
            <person name="Nagai K."/>
            <person name="Kimura K."/>
            <person name="Makita H."/>
            <person name="Sekine M."/>
            <person name="Obayashi M."/>
            <person name="Nishi T."/>
            <person name="Shibahara T."/>
            <person name="Tanaka T."/>
            <person name="Ishii S."/>
            <person name="Yamamoto J."/>
            <person name="Saito K."/>
            <person name="Kawai Y."/>
            <person name="Isono Y."/>
            <person name="Nakamura Y."/>
            <person name="Nagahari K."/>
            <person name="Murakami K."/>
            <person name="Yasuda T."/>
            <person name="Iwayanagi T."/>
            <person name="Wagatsuma M."/>
            <person name="Shiratori A."/>
            <person name="Sudo H."/>
            <person name="Hosoiri T."/>
            <person name="Kaku Y."/>
            <person name="Kodaira H."/>
            <person name="Kondo H."/>
            <person name="Sugawara M."/>
            <person name="Takahashi M."/>
            <person name="Kanda K."/>
            <person name="Yokoi T."/>
            <person name="Furuya T."/>
            <person name="Kikkawa E."/>
            <person name="Omura Y."/>
            <person name="Abe K."/>
            <person name="Kamihara K."/>
            <person name="Katsuta N."/>
            <person name="Sato K."/>
            <person name="Tanikawa M."/>
            <person name="Yamazaki M."/>
            <person name="Ninomiya K."/>
            <person name="Ishibashi T."/>
            <person name="Yamashita H."/>
            <person name="Murakawa K."/>
            <person name="Fujimori K."/>
            <person name="Tanai H."/>
            <person name="Kimata M."/>
            <person name="Watanabe M."/>
            <person name="Hiraoka S."/>
            <person name="Chiba Y."/>
            <person name="Ishida S."/>
            <person name="Ono Y."/>
            <person name="Takiguchi S."/>
            <person name="Watanabe S."/>
            <person name="Yosida M."/>
            <person name="Hotuta T."/>
            <person name="Kusano J."/>
            <person name="Kanehori K."/>
            <person name="Takahashi-Fujii A."/>
            <person name="Hara H."/>
            <person name="Tanase T.-O."/>
            <person name="Nomura Y."/>
            <person name="Togiya S."/>
            <person name="Komai F."/>
            <person name="Hara R."/>
            <person name="Takeuchi K."/>
            <person name="Arita M."/>
            <person name="Imose N."/>
            <person name="Musashino K."/>
            <person name="Yuuki H."/>
            <person name="Oshima A."/>
            <person name="Sasaki N."/>
            <person name="Aotsuka S."/>
            <person name="Yoshikawa Y."/>
            <person name="Matsunawa H."/>
            <person name="Ichihara T."/>
            <person name="Shiohata N."/>
            <person name="Sano S."/>
            <person name="Moriya S."/>
            <person name="Momiyama H."/>
            <person name="Satoh N."/>
            <person name="Takami S."/>
            <person name="Terashima Y."/>
            <person name="Suzuki O."/>
            <person name="Nakagawa S."/>
            <person name="Senoh A."/>
            <person name="Mizoguchi H."/>
            <person name="Goto Y."/>
            <person name="Shimizu F."/>
            <person name="Wakebe H."/>
            <person name="Hishigaki H."/>
            <person name="Watanabe T."/>
            <person name="Sugiyama A."/>
            <person name="Takemoto M."/>
            <person name="Kawakami B."/>
            <person name="Yamazaki M."/>
            <person name="Watanabe K."/>
            <person name="Kumagai A."/>
            <person name="Itakura S."/>
            <person name="Fukuzumi Y."/>
            <person name="Fujimori Y."/>
            <person name="Komiyama M."/>
            <person name="Tashiro H."/>
            <person name="Tanigami A."/>
            <person name="Fujiwara T."/>
            <person name="Ono T."/>
            <person name="Yamada K."/>
            <person name="Fujii Y."/>
            <person name="Ozaki K."/>
            <person name="Hirao M."/>
            <person name="Ohmori Y."/>
            <person name="Kawabata A."/>
            <person name="Hikiji T."/>
            <person name="Kobatake N."/>
            <person name="Inagaki H."/>
            <person name="Ikema Y."/>
            <person name="Okamoto S."/>
            <person name="Okitani R."/>
            <person name="Kawakami T."/>
            <person name="Noguchi S."/>
            <person name="Itoh T."/>
            <person name="Shigeta K."/>
            <person name="Senba T."/>
            <person name="Matsumura K."/>
            <person name="Nakajima Y."/>
            <person name="Mizuno T."/>
            <person name="Morinaga M."/>
            <person name="Sasaki M."/>
            <person name="Togashi T."/>
            <person name="Oyama M."/>
            <person name="Hata H."/>
            <person name="Watanabe M."/>
            <person name="Komatsu T."/>
            <person name="Mizushima-Sugano J."/>
            <person name="Satoh T."/>
            <person name="Shirai Y."/>
            <person name="Takahashi Y."/>
            <person name="Nakagawa K."/>
            <person name="Okumura K."/>
            <person name="Nagase T."/>
            <person name="Nomura N."/>
            <person name="Kikuchi H."/>
            <person name="Masuho Y."/>
            <person name="Yamashita R."/>
            <person name="Nakai K."/>
            <person name="Yada T."/>
            <person name="Nakamura Y."/>
            <person name="Ohara O."/>
            <person name="Isogai T."/>
            <person name="Sugano S."/>
        </authorList>
    </citation>
    <scope>NUCLEOTIDE SEQUENCE [LARGE SCALE MRNA]</scope>
    <source>
        <tissue evidence="13">Small intestine</tissue>
    </source>
</reference>
<reference evidence="12" key="4">
    <citation type="journal article" date="2004" name="Genome Res.">
        <title>The status, quality, and expansion of the NIH full-length cDNA project: the Mammalian Gene Collection (MGC).</title>
        <authorList>
            <consortium name="The MGC Project Team"/>
        </authorList>
    </citation>
    <scope>NUCLEOTIDE SEQUENCE [LARGE SCALE MRNA]</scope>
    <source>
        <tissue evidence="12">Skin</tissue>
    </source>
</reference>
<reference key="5">
    <citation type="journal article" date="2003" name="Nature">
        <title>Proteomic characterization of the human centrosome by protein correlation profiling.</title>
        <authorList>
            <person name="Andersen J.S."/>
            <person name="Wilkinson C.J."/>
            <person name="Mayor T."/>
            <person name="Mortensen P."/>
            <person name="Nigg E.A."/>
            <person name="Mann M."/>
        </authorList>
    </citation>
    <scope>IDENTIFICATION BY MASS SPECTROMETRY</scope>
    <source>
        <tissue>Lymphoblast</tissue>
    </source>
</reference>
<reference key="6">
    <citation type="journal article" date="2009" name="Oncogene">
        <title>MITOSTATIN, a putative tumor suppressor on chromosome 12q24.1, is downregulated in human bladder and breast cancer.</title>
        <authorList>
            <person name="Vecchione A."/>
            <person name="Fassan M."/>
            <person name="Anesti V."/>
            <person name="Morrione A."/>
            <person name="Goldoni S."/>
            <person name="Baldassarre G."/>
            <person name="Byrne D."/>
            <person name="D'Arca D."/>
            <person name="Palazzo J.P."/>
            <person name="Lloyd J."/>
            <person name="Scorrano L."/>
            <person name="Gomella L.G."/>
            <person name="Iozzo R.V."/>
            <person name="Baffa R."/>
        </authorList>
    </citation>
    <scope>FUNCTION</scope>
    <scope>SUBCELLULAR LOCATION</scope>
    <scope>TISSUE SPECIFICITY</scope>
    <scope>VARIANTS PRO-44 AND LYS-93</scope>
</reference>
<reference key="7">
    <citation type="journal article" date="2014" name="Nat. Commun.">
        <title>Ubiquitin-proteasome system controls ciliogenesis at the initial step of axoneme extension.</title>
        <authorList>
            <person name="Kasahara K."/>
            <person name="Kawakami Y."/>
            <person name="Kiyono T."/>
            <person name="Yonemura S."/>
            <person name="Kawamura Y."/>
            <person name="Era S."/>
            <person name="Matsuzaki F."/>
            <person name="Goshima N."/>
            <person name="Inagaki M."/>
        </authorList>
    </citation>
    <scope>FUNCTION</scope>
    <scope>INTERACTION WITH KCTD17</scope>
    <scope>MUTAGENESIS OF LYS-50 AND LYS-57</scope>
    <scope>UBIQUITINATION AT LYS-50 AND LYS-57</scope>
    <scope>UBIQUITINATION BY THE BCR(KCTD17) COMPLEX</scope>
</reference>
<reference key="8">
    <citation type="journal article" date="2024" name="Nat. Commun.">
        <title>Uncovering structural themes across cilia microtubule inner proteins with implications for human cilia function.</title>
        <authorList>
            <person name="Andersen J.S."/>
            <person name="Vijayakumaran A."/>
            <person name="Godbehere C."/>
            <person name="Lorentzen E."/>
            <person name="Mennella V."/>
            <person name="Schou K.B."/>
        </authorList>
    </citation>
    <scope>SUBCELLULAR LOCATION</scope>
</reference>
<feature type="chain" id="PRO_0000292609" description="Trichoplein keratin filament-binding protein">
    <location>
        <begin position="1"/>
        <end position="498"/>
    </location>
</feature>
<feature type="region of interest" description="Interaction with keratin proteins" evidence="3">
    <location>
        <begin position="73"/>
        <end position="498"/>
    </location>
</feature>
<feature type="region of interest" description="Disordered" evidence="2">
    <location>
        <begin position="167"/>
        <end position="189"/>
    </location>
</feature>
<feature type="region of interest" description="Trichohyalin/plectin homology domain" evidence="3">
    <location>
        <begin position="259"/>
        <end position="425"/>
    </location>
</feature>
<feature type="region of interest" description="Disordered" evidence="2">
    <location>
        <begin position="447"/>
        <end position="498"/>
    </location>
</feature>
<feature type="coiled-coil region" evidence="1">
    <location>
        <begin position="11"/>
        <end position="39"/>
    </location>
</feature>
<feature type="coiled-coil region" evidence="1">
    <location>
        <begin position="66"/>
        <end position="136"/>
    </location>
</feature>
<feature type="coiled-coil region" evidence="1">
    <location>
        <begin position="163"/>
        <end position="353"/>
    </location>
</feature>
<feature type="coiled-coil region" evidence="1">
    <location>
        <begin position="380"/>
        <end position="479"/>
    </location>
</feature>
<feature type="compositionally biased region" description="Basic and acidic residues" evidence="2">
    <location>
        <begin position="168"/>
        <end position="189"/>
    </location>
</feature>
<feature type="cross-link" description="Glycyl lysine isopeptide (Lys-Gly) (interchain with G-Cter in ubiquitin)" evidence="10">
    <location>
        <position position="50"/>
    </location>
</feature>
<feature type="cross-link" description="Glycyl lysine isopeptide (Lys-Gly) (interchain with G-Cter in ubiquitin)" evidence="10">
    <location>
        <position position="57"/>
    </location>
</feature>
<feature type="sequence variant" id="VAR_064056" description="In a gastric carcinoma sample; dbSNP:rs202208566." evidence="4">
    <original>S</original>
    <variation>P</variation>
    <location>
        <position position="44"/>
    </location>
</feature>
<feature type="sequence variant" id="VAR_064057" description="In a pancreatic carcinoma sample; dbSNP:rs200027650." evidence="4">
    <original>E</original>
    <variation>K</variation>
    <location>
        <position position="93"/>
    </location>
</feature>
<feature type="sequence variant" id="VAR_053924" description="In dbSNP:rs10774978.">
    <original>K</original>
    <variation>R</variation>
    <location>
        <position position="127"/>
    </location>
</feature>
<feature type="sequence variant" id="VAR_053925" description="In dbSNP:rs16940680.">
    <original>E</original>
    <variation>K</variation>
    <location>
        <position position="417"/>
    </location>
</feature>
<feature type="mutagenesis site" description="Decreased ubiquitination. Negative effect on ubiquitination is higher when associated with R-57." evidence="5">
    <original>K</original>
    <variation>R</variation>
    <location>
        <position position="50"/>
    </location>
</feature>
<feature type="mutagenesis site" description="Decreased ubiquitination. Negative effect on ubiquitination is higher when associated with R-50." evidence="5">
    <original>K</original>
    <variation>R</variation>
    <location>
        <position position="57"/>
    </location>
</feature>
<feature type="sequence conflict" description="In Ref. 3; BAC03960." evidence="7" ref="3">
    <original>A</original>
    <variation>V</variation>
    <location>
        <position position="326"/>
    </location>
</feature>
<dbReference type="EMBL" id="AY007230">
    <property type="protein sequence ID" value="AAG12971.1"/>
    <property type="molecule type" value="mRNA"/>
</dbReference>
<dbReference type="EMBL" id="AK092736">
    <property type="protein sequence ID" value="BAC03960.1"/>
    <property type="molecule type" value="mRNA"/>
</dbReference>
<dbReference type="EMBL" id="BC004285">
    <property type="protein sequence ID" value="AAH04285.1"/>
    <property type="molecule type" value="mRNA"/>
</dbReference>
<dbReference type="CCDS" id="CCDS9137.1"/>
<dbReference type="RefSeq" id="NP_001137324.1">
    <property type="nucleotide sequence ID" value="NM_001143852.2"/>
</dbReference>
<dbReference type="RefSeq" id="NP_115676.1">
    <property type="nucleotide sequence ID" value="NM_032300.5"/>
</dbReference>
<dbReference type="RefSeq" id="XP_011537138.1">
    <property type="nucleotide sequence ID" value="XM_011538836.3"/>
</dbReference>
<dbReference type="RefSeq" id="XP_011537139.1">
    <property type="nucleotide sequence ID" value="XM_011538837.2"/>
</dbReference>
<dbReference type="RefSeq" id="XP_054229438.1">
    <property type="nucleotide sequence ID" value="XM_054373463.1"/>
</dbReference>
<dbReference type="RefSeq" id="XP_054229439.1">
    <property type="nucleotide sequence ID" value="XM_054373464.1"/>
</dbReference>
<dbReference type="SMR" id="Q9BT92"/>
<dbReference type="BioGRID" id="123987">
    <property type="interactions" value="132"/>
</dbReference>
<dbReference type="FunCoup" id="Q9BT92">
    <property type="interactions" value="1769"/>
</dbReference>
<dbReference type="IntAct" id="Q9BT92">
    <property type="interactions" value="84"/>
</dbReference>
<dbReference type="MINT" id="Q9BT92"/>
<dbReference type="STRING" id="9606.ENSP00000324404"/>
<dbReference type="iPTMnet" id="Q9BT92"/>
<dbReference type="PhosphoSitePlus" id="Q9BT92"/>
<dbReference type="BioMuta" id="TCHP"/>
<dbReference type="DMDM" id="74733103"/>
<dbReference type="jPOST" id="Q9BT92"/>
<dbReference type="MassIVE" id="Q9BT92"/>
<dbReference type="PaxDb" id="9606-ENSP00000324404"/>
<dbReference type="PeptideAtlas" id="Q9BT92"/>
<dbReference type="ProteomicsDB" id="78961"/>
<dbReference type="Antibodypedia" id="49415">
    <property type="antibodies" value="149 antibodies from 25 providers"/>
</dbReference>
<dbReference type="DNASU" id="84260"/>
<dbReference type="Ensembl" id="ENST00000312777.9">
    <property type="protein sequence ID" value="ENSP00000324404.5"/>
    <property type="gene ID" value="ENSG00000139437.18"/>
</dbReference>
<dbReference type="Ensembl" id="ENST00000405876.9">
    <property type="protein sequence ID" value="ENSP00000384520.4"/>
    <property type="gene ID" value="ENSG00000139437.18"/>
</dbReference>
<dbReference type="Ensembl" id="ENST00000544838.5">
    <property type="protein sequence ID" value="ENSP00000440838.1"/>
    <property type="gene ID" value="ENSG00000139437.18"/>
</dbReference>
<dbReference type="GeneID" id="84260"/>
<dbReference type="KEGG" id="hsa:84260"/>
<dbReference type="MANE-Select" id="ENST00000405876.9">
    <property type="protein sequence ID" value="ENSP00000384520.4"/>
    <property type="RefSeq nucleotide sequence ID" value="NM_001143852.2"/>
    <property type="RefSeq protein sequence ID" value="NP_001137324.1"/>
</dbReference>
<dbReference type="UCSC" id="uc001tpn.4">
    <property type="organism name" value="human"/>
</dbReference>
<dbReference type="AGR" id="HGNC:28135"/>
<dbReference type="CTD" id="84260"/>
<dbReference type="DisGeNET" id="84260"/>
<dbReference type="GeneCards" id="TCHP"/>
<dbReference type="HGNC" id="HGNC:28135">
    <property type="gene designation" value="TCHP"/>
</dbReference>
<dbReference type="HPA" id="ENSG00000139437">
    <property type="expression patterns" value="Low tissue specificity"/>
</dbReference>
<dbReference type="MIM" id="612654">
    <property type="type" value="gene"/>
</dbReference>
<dbReference type="neXtProt" id="NX_Q9BT92"/>
<dbReference type="OpenTargets" id="ENSG00000139437"/>
<dbReference type="PharmGKB" id="PA143485629"/>
<dbReference type="VEuPathDB" id="HostDB:ENSG00000139437"/>
<dbReference type="eggNOG" id="ENOG502QVSH">
    <property type="taxonomic scope" value="Eukaryota"/>
</dbReference>
<dbReference type="GeneTree" id="ENSGT01120000271979"/>
<dbReference type="HOGENOM" id="CLU_042533_1_0_1"/>
<dbReference type="InParanoid" id="Q9BT92"/>
<dbReference type="OMA" id="QNSHYFR"/>
<dbReference type="OrthoDB" id="6431598at2759"/>
<dbReference type="PAN-GO" id="Q9BT92">
    <property type="GO annotations" value="2 GO annotations based on evolutionary models"/>
</dbReference>
<dbReference type="PhylomeDB" id="Q9BT92"/>
<dbReference type="TreeFam" id="TF329032"/>
<dbReference type="PathwayCommons" id="Q9BT92"/>
<dbReference type="SignaLink" id="Q9BT92"/>
<dbReference type="SIGNOR" id="Q9BT92"/>
<dbReference type="BioGRID-ORCS" id="84260">
    <property type="hits" value="18 hits in 1157 CRISPR screens"/>
</dbReference>
<dbReference type="ChiTaRS" id="TCHP">
    <property type="organism name" value="human"/>
</dbReference>
<dbReference type="GeneWiki" id="TCHP"/>
<dbReference type="GenomeRNAi" id="84260"/>
<dbReference type="Pharos" id="Q9BT92">
    <property type="development level" value="Tbio"/>
</dbReference>
<dbReference type="PRO" id="PR:Q9BT92"/>
<dbReference type="Proteomes" id="UP000005640">
    <property type="component" value="Chromosome 12"/>
</dbReference>
<dbReference type="RNAct" id="Q9BT92">
    <property type="molecule type" value="protein"/>
</dbReference>
<dbReference type="Bgee" id="ENSG00000139437">
    <property type="expression patterns" value="Expressed in sural nerve and 167 other cell types or tissues"/>
</dbReference>
<dbReference type="ExpressionAtlas" id="Q9BT92">
    <property type="expression patterns" value="baseline and differential"/>
</dbReference>
<dbReference type="GO" id="GO:0045179">
    <property type="term" value="C:apical cortex"/>
    <property type="evidence" value="ECO:0000314"/>
    <property type="project" value="HGNC-UCL"/>
</dbReference>
<dbReference type="GO" id="GO:0005813">
    <property type="term" value="C:centrosome"/>
    <property type="evidence" value="ECO:0000314"/>
    <property type="project" value="UniProtKB"/>
</dbReference>
<dbReference type="GO" id="GO:0036064">
    <property type="term" value="C:ciliary basal body"/>
    <property type="evidence" value="ECO:0000314"/>
    <property type="project" value="HPA"/>
</dbReference>
<dbReference type="GO" id="GO:0005929">
    <property type="term" value="C:cilium"/>
    <property type="evidence" value="ECO:0000314"/>
    <property type="project" value="HPA"/>
</dbReference>
<dbReference type="GO" id="GO:0005737">
    <property type="term" value="C:cytoplasm"/>
    <property type="evidence" value="ECO:0000314"/>
    <property type="project" value="UniProtKB"/>
</dbReference>
<dbReference type="GO" id="GO:0005829">
    <property type="term" value="C:cytosol"/>
    <property type="evidence" value="ECO:0000314"/>
    <property type="project" value="HPA"/>
</dbReference>
<dbReference type="GO" id="GO:0030057">
    <property type="term" value="C:desmosome"/>
    <property type="evidence" value="ECO:0007669"/>
    <property type="project" value="UniProtKB-SubCell"/>
</dbReference>
<dbReference type="GO" id="GO:0045095">
    <property type="term" value="C:keratin filament"/>
    <property type="evidence" value="ECO:0000314"/>
    <property type="project" value="HGNC-UCL"/>
</dbReference>
<dbReference type="GO" id="GO:0005739">
    <property type="term" value="C:mitochondrion"/>
    <property type="evidence" value="ECO:0000314"/>
    <property type="project" value="UniProtKB"/>
</dbReference>
<dbReference type="GO" id="GO:0031965">
    <property type="term" value="C:nuclear membrane"/>
    <property type="evidence" value="ECO:0000314"/>
    <property type="project" value="HPA"/>
</dbReference>
<dbReference type="GO" id="GO:0005886">
    <property type="term" value="C:plasma membrane"/>
    <property type="evidence" value="ECO:0000314"/>
    <property type="project" value="UniProtKB"/>
</dbReference>
<dbReference type="GO" id="GO:0006915">
    <property type="term" value="P:apoptotic process"/>
    <property type="evidence" value="ECO:0000314"/>
    <property type="project" value="UniProtKB"/>
</dbReference>
<dbReference type="GO" id="GO:0030030">
    <property type="term" value="P:cell projection organization"/>
    <property type="evidence" value="ECO:0007669"/>
    <property type="project" value="UniProtKB-KW"/>
</dbReference>
<dbReference type="GO" id="GO:0030308">
    <property type="term" value="P:negative regulation of cell growth"/>
    <property type="evidence" value="ECO:0000314"/>
    <property type="project" value="UniProtKB"/>
</dbReference>
<dbReference type="GO" id="GO:1902018">
    <property type="term" value="P:negative regulation of cilium assembly"/>
    <property type="evidence" value="ECO:0000315"/>
    <property type="project" value="UniProtKB"/>
</dbReference>
<dbReference type="InterPro" id="IPR043596">
    <property type="entry name" value="CFAP53/TCHP"/>
</dbReference>
<dbReference type="InterPro" id="IPR043597">
    <property type="entry name" value="TPH_dom"/>
</dbReference>
<dbReference type="PANTHER" id="PTHR31183:SF2">
    <property type="entry name" value="TRICHOPLEIN KERATIN FILAMENT-BINDING PROTEIN"/>
    <property type="match status" value="1"/>
</dbReference>
<dbReference type="PANTHER" id="PTHR31183">
    <property type="entry name" value="TRICHOPLEIN KERATIN FILAMENT-BINDING PROTEIN FAMILY MEMBER"/>
    <property type="match status" value="1"/>
</dbReference>
<dbReference type="Pfam" id="PF13868">
    <property type="entry name" value="TPH"/>
    <property type="match status" value="1"/>
</dbReference>
<sequence length="498" mass="61072">MALPTLPSYWCSQQRLNQQLARQREQEARLRQQWEQNSRYFRMSDICSSKQAEWSSKTSYQRSMHAYQREKMKEEKRRSLEARREKLRQLMQEEQDLLARELEELRLSMNLQERRIREQHGKLKSAKEEQRKLIAEQLLYEHWKKNNPKLREMELDLHQKHVVNSWEMQKEEKKQQEATAEQENKRYENEYERARREALERMKAEEERRQLEDKLQAEALLQQMEELKLKEVEATKLKKEQENLLKQRWELERLEEERKQMEAFRQKAELGRFLRHQYNAQLSRRTQQIQEELEADRRILQALLEKEDESQRLHLARREQVMADVAWMKQAIEEQLQLERAREAELQMLLREEAKEMWEKREAEWARERSARDRLMSEVLTGRQQQIQEKIEQNRRAQEESLKHREQLIRNLEEVRELARREKEESEKLKSARKQELEAQVAERRLQAWEADQQEEEEEEEARRVEQLSDALLQQEAETMAEQGYRPKPYGHPKIAWN</sequence>
<protein>
    <recommendedName>
        <fullName>Trichoplein keratin filament-binding protein</fullName>
        <shortName>Protein TCHP</shortName>
    </recommendedName>
    <alternativeName>
        <fullName>Mitochondrial protein with oncostatic activity</fullName>
        <shortName>Mitostatin</shortName>
    </alternativeName>
    <alternativeName>
        <fullName>Tumor suppressor protein</fullName>
    </alternativeName>
</protein>
<proteinExistence type="evidence at protein level"/>
<keyword id="KW-0053">Apoptosis</keyword>
<keyword id="KW-0965">Cell junction</keyword>
<keyword id="KW-1003">Cell membrane</keyword>
<keyword id="KW-0970">Cilium biogenesis/degradation</keyword>
<keyword id="KW-0175">Coiled coil</keyword>
<keyword id="KW-0963">Cytoplasm</keyword>
<keyword id="KW-0206">Cytoskeleton</keyword>
<keyword id="KW-1017">Isopeptide bond</keyword>
<keyword id="KW-0472">Membrane</keyword>
<keyword id="KW-0496">Mitochondrion</keyword>
<keyword id="KW-1267">Proteomics identification</keyword>
<keyword id="KW-1185">Reference proteome</keyword>
<keyword id="KW-0043">Tumor suppressor</keyword>
<keyword id="KW-0832">Ubl conjugation</keyword>
<evidence type="ECO:0000255" key="1"/>
<evidence type="ECO:0000256" key="2">
    <source>
        <dbReference type="SAM" id="MobiDB-lite"/>
    </source>
</evidence>
<evidence type="ECO:0000269" key="3">
    <source>
    </source>
</evidence>
<evidence type="ECO:0000269" key="4">
    <source>
    </source>
</evidence>
<evidence type="ECO:0000269" key="5">
    <source>
    </source>
</evidence>
<evidence type="ECO:0000269" key="6">
    <source>
    </source>
</evidence>
<evidence type="ECO:0000305" key="7"/>
<evidence type="ECO:0000305" key="8">
    <source>
    </source>
</evidence>
<evidence type="ECO:0000305" key="9">
    <source>
    </source>
</evidence>
<evidence type="ECO:0000305" key="10">
    <source>
    </source>
</evidence>
<evidence type="ECO:0000312" key="11">
    <source>
        <dbReference type="EMBL" id="AAG12971.1"/>
    </source>
</evidence>
<evidence type="ECO:0000312" key="12">
    <source>
        <dbReference type="EMBL" id="AAH04285.1"/>
    </source>
</evidence>
<evidence type="ECO:0000312" key="13">
    <source>
        <dbReference type="EMBL" id="BAC03960.1"/>
    </source>
</evidence>
<gene>
    <name evidence="12" type="primary">TCHP</name>
</gene>
<comment type="function">
    <text evidence="3 4 5">Tumor suppressor which has the ability to inhibit cell growth and be pro-apoptotic during cell stress. Inhibits cell growth in bladder and prostate cancer cells by a down-regulation of HSPB1 by inhibiting its phosphorylation. May act as a 'capping' or 'branching' protein for keratin filaments in the cell periphery. May regulate K8/K18 filament and desmosome organization mainly at the apical or peripheral regions of simple epithelial cells (PubMed:15731013, PubMed:18931701). Is a negative regulator of ciliogenesis (PubMed:25270598).</text>
</comment>
<comment type="subunit">
    <text evidence="3 5">Interacts specifically with keratin proteins including, KRT5, KRT6A, KRT8, KRT14, KRT16 and KRT18 (PubMed:15731013). Interacts with KCTD17 (PubMed:25270598).</text>
</comment>
<comment type="interaction">
    <interactant intactId="EBI-740781">
        <id>Q9BT92</id>
    </interactant>
    <interactant intactId="EBI-1166928">
        <id>Q8N5M1</id>
        <label>ATPAF2</label>
    </interactant>
    <organismsDiffer>false</organismsDiffer>
    <experiments>3</experiments>
</comment>
<comment type="interaction">
    <interactant intactId="EBI-740781">
        <id>Q9BT92</id>
    </interactant>
    <interactant intactId="EBI-1050106">
        <id>O75934</id>
        <label>BCAS2</label>
    </interactant>
    <organismsDiffer>false</organismsDiffer>
    <experiments>3</experiments>
</comment>
<comment type="interaction">
    <interactant intactId="EBI-740781">
        <id>Q9BT92</id>
    </interactant>
    <interactant intactId="EBI-742722">
        <id>Q9BUH8</id>
        <label>BEGAIN</label>
    </interactant>
    <organismsDiffer>false</organismsDiffer>
    <experiments>3</experiments>
</comment>
<comment type="interaction">
    <interactant intactId="EBI-740781">
        <id>Q9BT92</id>
    </interactant>
    <interactant intactId="EBI-11524851">
        <id>Q8NA61-2</id>
        <label>CBY2</label>
    </interactant>
    <organismsDiffer>false</organismsDiffer>
    <experiments>3</experiments>
</comment>
<comment type="interaction">
    <interactant intactId="EBI-740781">
        <id>Q9BT92</id>
    </interactant>
    <interactant intactId="EBI-11977221">
        <id>Q86Z20</id>
        <label>CCDC125</label>
    </interactant>
    <organismsDiffer>false</organismsDiffer>
    <experiments>3</experiments>
</comment>
<comment type="interaction">
    <interactant intactId="EBI-740781">
        <id>Q9BT92</id>
    </interactant>
    <interactant intactId="EBI-10961312">
        <id>Q8IYE1</id>
        <label>CCDC13</label>
    </interactant>
    <organismsDiffer>false</organismsDiffer>
    <experiments>4</experiments>
</comment>
<comment type="interaction">
    <interactant intactId="EBI-740781">
        <id>Q9BT92</id>
    </interactant>
    <interactant intactId="EBI-2548868">
        <id>P0C7W6</id>
        <label>CCDC172</label>
    </interactant>
    <organismsDiffer>false</organismsDiffer>
    <experiments>7</experiments>
</comment>
<comment type="interaction">
    <interactant intactId="EBI-740781">
        <id>Q9BT92</id>
    </interactant>
    <interactant intactId="EBI-1181367">
        <id>Q01850</id>
        <label>CDR2</label>
    </interactant>
    <organismsDiffer>false</organismsDiffer>
    <experiments>8</experiments>
</comment>
<comment type="interaction">
    <interactant intactId="EBI-740781">
        <id>Q9BT92</id>
    </interactant>
    <interactant intactId="EBI-11063830">
        <id>Q86X02</id>
        <label>CDR2L</label>
    </interactant>
    <organismsDiffer>false</organismsDiffer>
    <experiments>3</experiments>
</comment>
<comment type="interaction">
    <interactant intactId="EBI-740781">
        <id>Q9BT92</id>
    </interactant>
    <interactant intactId="EBI-399105">
        <id>Q9NPF5</id>
        <label>DMAP1</label>
    </interactant>
    <organismsDiffer>false</organismsDiffer>
    <experiments>5</experiments>
</comment>
<comment type="interaction">
    <interactant intactId="EBI-740781">
        <id>Q9BT92</id>
    </interactant>
    <interactant intactId="EBI-740680">
        <id>Q8WWB3</id>
        <label>DYDC1</label>
    </interactant>
    <organismsDiffer>false</organismsDiffer>
    <experiments>6</experiments>
</comment>
<comment type="interaction">
    <interactant intactId="EBI-740781">
        <id>Q9BT92</id>
    </interactant>
    <interactant intactId="EBI-301024">
        <id>Q9NRA8</id>
        <label>EIF4ENIF1</label>
    </interactant>
    <organismsDiffer>false</organismsDiffer>
    <experiments>3</experiments>
</comment>
<comment type="interaction">
    <interactant intactId="EBI-740781">
        <id>Q9BT92</id>
    </interactant>
    <interactant intactId="EBI-13371226">
        <id>Q9NYK6-3</id>
        <label>EURL</label>
    </interactant>
    <organismsDiffer>false</organismsDiffer>
    <experiments>3</experiments>
</comment>
<comment type="interaction">
    <interactant intactId="EBI-740781">
        <id>Q9BT92</id>
    </interactant>
    <interactant intactId="EBI-740641">
        <id>Q9NP66</id>
        <label>HMG20A</label>
    </interactant>
    <organismsDiffer>false</organismsDiffer>
    <experiments>3</experiments>
</comment>
<comment type="interaction">
    <interactant intactId="EBI-740781">
        <id>Q9BT92</id>
    </interactant>
    <interactant intactId="EBI-10961706">
        <id>Q96ED9-2</id>
        <label>HOOK2</label>
    </interactant>
    <organismsDiffer>false</organismsDiffer>
    <experiments>3</experiments>
</comment>
<comment type="interaction">
    <interactant intactId="EBI-740781">
        <id>Q9BT92</id>
    </interactant>
    <interactant intactId="EBI-713450">
        <id>Q02363</id>
        <label>ID2</label>
    </interactant>
    <organismsDiffer>false</organismsDiffer>
    <experiments>3</experiments>
</comment>
<comment type="interaction">
    <interactant intactId="EBI-740781">
        <id>Q9BT92</id>
    </interactant>
    <interactant intactId="EBI-747204">
        <id>Q9UKT9</id>
        <label>IKZF3</label>
    </interactant>
    <organismsDiffer>false</organismsDiffer>
    <experiments>3</experiments>
</comment>
<comment type="interaction">
    <interactant intactId="EBI-740781">
        <id>Q9BT92</id>
    </interactant>
    <interactant intactId="EBI-2805604">
        <id>Q2KHM9</id>
        <label>KIAA0753</label>
    </interactant>
    <organismsDiffer>false</organismsDiffer>
    <experiments>4</experiments>
</comment>
<comment type="interaction">
    <interactant intactId="EBI-740781">
        <id>Q9BT92</id>
    </interactant>
    <interactant intactId="EBI-739566">
        <id>P19012</id>
        <label>KRT15</label>
    </interactant>
    <organismsDiffer>false</organismsDiffer>
    <experiments>5</experiments>
</comment>
<comment type="interaction">
    <interactant intactId="EBI-740781">
        <id>Q9BT92</id>
    </interactant>
    <interactant intactId="EBI-356410">
        <id>P08779</id>
        <label>KRT16</label>
    </interactant>
    <organismsDiffer>false</organismsDiffer>
    <experiments>3</experiments>
</comment>
<comment type="interaction">
    <interactant intactId="EBI-740781">
        <id>Q9BT92</id>
    </interactant>
    <interactant intactId="EBI-742756">
        <id>P08727</id>
        <label>KRT19</label>
    </interactant>
    <organismsDiffer>false</organismsDiffer>
    <experiments>3</experiments>
</comment>
<comment type="interaction">
    <interactant intactId="EBI-740781">
        <id>Q9BT92</id>
    </interactant>
    <interactant intactId="EBI-2952736">
        <id>Q2M2I5</id>
        <label>KRT24</label>
    </interactant>
    <organismsDiffer>false</organismsDiffer>
    <experiments>3</experiments>
</comment>
<comment type="interaction">
    <interactant intactId="EBI-740781">
        <id>Q9BT92</id>
    </interactant>
    <interactant intactId="EBI-1044146">
        <id>Q14532</id>
        <label>KRT32</label>
    </interactant>
    <organismsDiffer>false</organismsDiffer>
    <experiments>3</experiments>
</comment>
<comment type="interaction">
    <interactant intactId="EBI-740781">
        <id>Q9BT92</id>
    </interactant>
    <interactant intactId="EBI-1047093">
        <id>O76011</id>
        <label>KRT34</label>
    </interactant>
    <organismsDiffer>false</organismsDiffer>
    <experiments>3</experiments>
</comment>
<comment type="interaction">
    <interactant intactId="EBI-740781">
        <id>Q9BT92</id>
    </interactant>
    <interactant intactId="EBI-1058674">
        <id>Q92764</id>
        <label>KRT35</label>
    </interactant>
    <organismsDiffer>false</organismsDiffer>
    <experiments>3</experiments>
</comment>
<comment type="interaction">
    <interactant intactId="EBI-740781">
        <id>Q9BT92</id>
    </interactant>
    <interactant intactId="EBI-10171697">
        <id>Q6A162</id>
        <label>KRT40</label>
    </interactant>
    <organismsDiffer>false</organismsDiffer>
    <experiments>3</experiments>
</comment>
<comment type="interaction">
    <interactant intactId="EBI-740781">
        <id>Q9BT92</id>
    </interactant>
    <interactant intactId="EBI-2949715">
        <id>O95678</id>
        <label>KRT75</label>
    </interactant>
    <organismsDiffer>false</organismsDiffer>
    <experiments>3</experiments>
</comment>
<comment type="interaction">
    <interactant intactId="EBI-740781">
        <id>Q9BT92</id>
    </interactant>
    <interactant intactId="EBI-741037">
        <id>Q9BRK4</id>
        <label>LZTS2</label>
    </interactant>
    <organismsDiffer>false</organismsDiffer>
    <experiments>3</experiments>
</comment>
<comment type="interaction">
    <interactant intactId="EBI-740781">
        <id>Q9BT92</id>
    </interactant>
    <interactant intactId="EBI-2801965">
        <id>Q5JXC2</id>
        <label>MIIP</label>
    </interactant>
    <organismsDiffer>false</organismsDiffer>
    <experiments>3</experiments>
</comment>
<comment type="interaction">
    <interactant intactId="EBI-740781">
        <id>Q9BT92</id>
    </interactant>
    <interactant intactId="EBI-2548751">
        <id>Q8TD10</id>
        <label>MIPOL1</label>
    </interactant>
    <organismsDiffer>false</organismsDiffer>
    <experiments>3</experiments>
</comment>
<comment type="interaction">
    <interactant intactId="EBI-740781">
        <id>Q9BT92</id>
    </interactant>
    <interactant intactId="EBI-2340269">
        <id>Q13064</id>
        <label>MKRN3</label>
    </interactant>
    <organismsDiffer>false</organismsDiffer>
    <experiments>9</experiments>
</comment>
<comment type="interaction">
    <interactant intactId="EBI-740781">
        <id>Q9BT92</id>
    </interactant>
    <interactant intactId="EBI-11522433">
        <id>Q5JR59-3</id>
        <label>MTUS2</label>
    </interactant>
    <organismsDiffer>false</organismsDiffer>
    <experiments>3</experiments>
</comment>
<comment type="interaction">
    <interactant intactId="EBI-740781">
        <id>Q9BT92</id>
    </interactant>
    <interactant intactId="EBI-8641936">
        <id>Q15742</id>
        <label>NAB2</label>
    </interactant>
    <organismsDiffer>false</organismsDiffer>
    <experiments>7</experiments>
</comment>
<comment type="interaction">
    <interactant intactId="EBI-740781">
        <id>Q9BT92</id>
    </interactant>
    <interactant intactId="EBI-10249760">
        <id>Q9UHB4</id>
        <label>NDOR1</label>
    </interactant>
    <organismsDiffer>false</organismsDiffer>
    <experiments>7</experiments>
</comment>
<comment type="interaction">
    <interactant intactId="EBI-740781">
        <id>Q9BT92</id>
    </interactant>
    <interactant intactId="EBI-744782">
        <id>Q9Y5B8</id>
        <label>NME7</label>
    </interactant>
    <organismsDiffer>false</organismsDiffer>
    <experiments>12</experiments>
</comment>
<comment type="interaction">
    <interactant intactId="EBI-740781">
        <id>Q9BT92</id>
    </interactant>
    <interactant intactId="EBI-741048">
        <id>Q7Z3B4</id>
        <label>NUP54</label>
    </interactant>
    <organismsDiffer>false</organismsDiffer>
    <experiments>3</experiments>
</comment>
<comment type="interaction">
    <interactant intactId="EBI-740781">
        <id>Q9BT92</id>
    </interactant>
    <interactant intactId="EBI-357828">
        <id>P28074</id>
        <label>PSMB5</label>
    </interactant>
    <organismsDiffer>false</organismsDiffer>
    <experiments>3</experiments>
</comment>
<comment type="interaction">
    <interactant intactId="EBI-740781">
        <id>Q9BT92</id>
    </interactant>
    <interactant intactId="EBI-14093916">
        <id>Q9UJ41-4</id>
        <label>RABGEF1</label>
    </interactant>
    <organismsDiffer>false</organismsDiffer>
    <experiments>3</experiments>
</comment>
<comment type="interaction">
    <interactant intactId="EBI-740781">
        <id>Q9BT92</id>
    </interactant>
    <interactant intactId="EBI-6257312">
        <id>Q9BVN2</id>
        <label>RUSC1</label>
    </interactant>
    <organismsDiffer>false</organismsDiffer>
    <experiments>3</experiments>
</comment>
<comment type="interaction">
    <interactant intactId="EBI-740781">
        <id>Q9BT92</id>
    </interactant>
    <interactant intactId="EBI-746930">
        <id>Q9H668</id>
        <label>STN1</label>
    </interactant>
    <organismsDiffer>false</organismsDiffer>
    <experiments>3</experiments>
</comment>
<comment type="interaction">
    <interactant intactId="EBI-740781">
        <id>Q9BT92</id>
    </interactant>
    <interactant intactId="EBI-719493">
        <id>P14373</id>
        <label>TRIM27</label>
    </interactant>
    <organismsDiffer>false</organismsDiffer>
    <experiments>4</experiments>
</comment>
<comment type="interaction">
    <interactant intactId="EBI-740781">
        <id>Q9BT92</id>
    </interactant>
    <interactant intactId="EBI-2130429">
        <id>Q9BYV2</id>
        <label>TRIM54</label>
    </interactant>
    <organismsDiffer>false</organismsDiffer>
    <experiments>3</experiments>
</comment>
<comment type="interaction">
    <interactant intactId="EBI-740781">
        <id>Q9BT92</id>
    </interactant>
    <interactant intactId="EBI-739895">
        <id>Q8N6Y0</id>
        <label>USHBP1</label>
    </interactant>
    <organismsDiffer>false</organismsDiffer>
    <experiments>3</experiments>
</comment>
<comment type="interaction">
    <interactant intactId="EBI-740781">
        <id>Q9BT92</id>
    </interactant>
    <interactant intactId="EBI-12040603">
        <id>Q9NZC7-5</id>
        <label>WWOX</label>
    </interactant>
    <organismsDiffer>false</organismsDiffer>
    <experiments>3</experiments>
</comment>
<comment type="interaction">
    <interactant intactId="EBI-740781">
        <id>Q9BT92</id>
    </interactant>
    <interactant intactId="EBI-11962760">
        <id>Q9NZV7</id>
        <label>ZIM2</label>
    </interactant>
    <organismsDiffer>false</organismsDiffer>
    <experiments>3</experiments>
</comment>
<comment type="interaction">
    <interactant intactId="EBI-740781">
        <id>Q9BT92</id>
    </interactant>
    <interactant intactId="EBI-7850213">
        <id>Q9UDW3</id>
        <label>ZMAT5</label>
    </interactant>
    <organismsDiffer>false</organismsDiffer>
    <experiments>3</experiments>
</comment>
<comment type="subcellular location">
    <subcellularLocation>
        <location evidence="3">Cytoplasm</location>
        <location evidence="3">Cytoskeleton</location>
    </subcellularLocation>
    <subcellularLocation>
        <location evidence="4">Cytoplasm</location>
    </subcellularLocation>
    <subcellularLocation>
        <location evidence="8 9">Cell membrane</location>
    </subcellularLocation>
    <subcellularLocation>
        <location evidence="4">Mitochondrion</location>
    </subcellularLocation>
    <subcellularLocation>
        <location evidence="3">Cell junction</location>
        <location evidence="3">Desmosome</location>
    </subcellularLocation>
    <subcellularLocation>
        <location evidence="6">Cytoplasm</location>
        <location evidence="6">Cytoskeleton</location>
        <location evidence="6">Microtubule organizing center</location>
        <location evidence="6">Centrosome</location>
    </subcellularLocation>
</comment>
<comment type="tissue specificity">
    <text evidence="4">Expressed at high levels in normal urothelial and breast epithelial cells. Also expressed in the smooth muscle and endothelial cells. Reduced expression seen in advanced bladder and breast carcinomas (at protein level). Ubiquitous. Expressed at highest levels in the heart, skeletal muscle, kidney, liver and testis.</text>
</comment>
<comment type="PTM">
    <text evidence="5">Ubiquitinated. Ubiquitination by the BCR(KCTD17) E3 ubiquitin ligase complex results in proteasomal degradation, and induces ciliogenesis.</text>
</comment>
<comment type="similarity">
    <text evidence="7">Belongs to the TCHP family.</text>
</comment>
<accession>Q9BT92</accession>
<accession>Q8NAG0</accession>